<dbReference type="SMR" id="P69678"/>
<dbReference type="FunCoup" id="P69678">
    <property type="interactions" value="1223"/>
</dbReference>
<dbReference type="PaxDb" id="9913-ENSBTAP00000002142"/>
<dbReference type="PeptideAtlas" id="P69678"/>
<dbReference type="eggNOG" id="KOG3338">
    <property type="taxonomic scope" value="Eukaryota"/>
</dbReference>
<dbReference type="InParanoid" id="P69678"/>
<dbReference type="Proteomes" id="UP000009136">
    <property type="component" value="Unplaced"/>
</dbReference>
<dbReference type="GO" id="GO:0005507">
    <property type="term" value="F:copper ion binding"/>
    <property type="evidence" value="ECO:0000318"/>
    <property type="project" value="GO_Central"/>
</dbReference>
<dbReference type="GO" id="GO:0010038">
    <property type="term" value="P:response to metal ion"/>
    <property type="evidence" value="ECO:0007669"/>
    <property type="project" value="InterPro"/>
</dbReference>
<dbReference type="FunFam" id="3.30.70.120:FF:000005">
    <property type="entry name" value="CUTA isoform 1"/>
    <property type="match status" value="1"/>
</dbReference>
<dbReference type="Gene3D" id="3.30.70.120">
    <property type="match status" value="1"/>
</dbReference>
<dbReference type="InterPro" id="IPR004323">
    <property type="entry name" value="Ion_tolerance_CutA"/>
</dbReference>
<dbReference type="InterPro" id="IPR011322">
    <property type="entry name" value="N-reg_PII-like_a/b"/>
</dbReference>
<dbReference type="InterPro" id="IPR015867">
    <property type="entry name" value="N-reg_PII/ATP_PRibTrfase_C"/>
</dbReference>
<dbReference type="PANTHER" id="PTHR23419">
    <property type="entry name" value="DIVALENT CATION TOLERANCE CUTA-RELATED"/>
    <property type="match status" value="1"/>
</dbReference>
<dbReference type="PANTHER" id="PTHR23419:SF1">
    <property type="entry name" value="PROTEIN CUTA"/>
    <property type="match status" value="1"/>
</dbReference>
<dbReference type="Pfam" id="PF03091">
    <property type="entry name" value="CutA1"/>
    <property type="match status" value="1"/>
</dbReference>
<dbReference type="SUPFAM" id="SSF54913">
    <property type="entry name" value="GlnB-like"/>
    <property type="match status" value="1"/>
</dbReference>
<comment type="function">
    <text>May form part of a complex of membrane proteins attached to acetylcholinesterase (AChE).</text>
</comment>
<comment type="subunit">
    <text evidence="1">Homotrimer.</text>
</comment>
<comment type="similarity">
    <text evidence="3">Belongs to the CutA family.</text>
</comment>
<gene>
    <name type="primary">CUTA</name>
</gene>
<sequence>MRRGRAPTFLLGGGAALLLSLFWMPTLLPAASRLLLLPRALLSMASGSPPAQPSSSSRSAYVPGSVSAAFVTCPNEKVAKEIARAVVEKRLACVNLVPQITSIYEWKGKIEEDSEVLMMIKTQSSLVPALTDFVRSVHPYEVAEVIALPVEQGNSPYLQWVRQVTESVPDSSTAPL</sequence>
<reference key="1">
    <citation type="journal article" date="2000" name="J. Biol. Chem.">
        <title>Two distinct proteins are associated with tetrameric acetylcholinesterase on the cell surface.</title>
        <authorList>
            <person name="Perrier A.L."/>
            <person name="Cousin X."/>
            <person name="Boschetti N."/>
            <person name="Haas R."/>
            <person name="Chatel J.-M."/>
            <person name="Bon S."/>
            <person name="Roberts W.L."/>
            <person name="Pickett S.R."/>
            <person name="Massoulie J."/>
            <person name="Rosenberry T.L."/>
            <person name="Krejci E."/>
        </authorList>
    </citation>
    <scope>NUCLEOTIDE SEQUENCE</scope>
    <scope>PROTEIN SEQUENCE OF 70-90; 96-100; 126-134; 136-158 AND 163-171</scope>
</reference>
<name>CUTA_BOVIN</name>
<feature type="signal peptide" evidence="2">
    <location>
        <begin position="1"/>
        <end position="30"/>
    </location>
</feature>
<feature type="chain" id="PRO_0000006378" description="Protein CutA">
    <location>
        <begin position="31"/>
        <end position="176"/>
    </location>
</feature>
<organism>
    <name type="scientific">Bos taurus</name>
    <name type="common">Bovine</name>
    <dbReference type="NCBI Taxonomy" id="9913"/>
    <lineage>
        <taxon>Eukaryota</taxon>
        <taxon>Metazoa</taxon>
        <taxon>Chordata</taxon>
        <taxon>Craniata</taxon>
        <taxon>Vertebrata</taxon>
        <taxon>Euteleostomi</taxon>
        <taxon>Mammalia</taxon>
        <taxon>Eutheria</taxon>
        <taxon>Laurasiatheria</taxon>
        <taxon>Artiodactyla</taxon>
        <taxon>Ruminantia</taxon>
        <taxon>Pecora</taxon>
        <taxon>Bovidae</taxon>
        <taxon>Bovinae</taxon>
        <taxon>Bos</taxon>
    </lineage>
</organism>
<accession>P69678</accession>
<keyword id="KW-0903">Direct protein sequencing</keyword>
<keyword id="KW-1185">Reference proteome</keyword>
<keyword id="KW-0732">Signal</keyword>
<protein>
    <recommendedName>
        <fullName>Protein CutA</fullName>
    </recommendedName>
    <alternativeName>
        <fullName>Brain acetylcholinesterase putative membrane anchor</fullName>
    </alternativeName>
</protein>
<proteinExistence type="evidence at protein level"/>
<evidence type="ECO:0000250" key="1"/>
<evidence type="ECO:0000255" key="2"/>
<evidence type="ECO:0000305" key="3"/>